<gene>
    <name type="primary">ntpE</name>
    <name type="synonym">ntpO</name>
    <name type="ordered locus">EHR_08245</name>
</gene>
<comment type="function">
    <text>Involved in ATP-driven sodium extrusion.</text>
</comment>
<comment type="PTM">
    <text>The N-terminus is blocked.</text>
</comment>
<comment type="similarity">
    <text evidence="1">Belongs to the V-ATPase E subunit family.</text>
</comment>
<feature type="chain" id="PRO_0000117336" description="V-type sodium ATPase subunit E">
    <location>
        <begin position="1"/>
        <end position="193"/>
    </location>
</feature>
<feature type="sequence conflict" description="In Ref. 1; BAA04272." evidence="1" ref="1">
    <original>MP</original>
    <variation>MTVDA</variation>
    <location>
        <begin position="1"/>
        <end position="2"/>
    </location>
</feature>
<dbReference type="EMBL" id="D17462">
    <property type="protein sequence ID" value="BAA04272.1"/>
    <property type="molecule type" value="Genomic_DNA"/>
</dbReference>
<dbReference type="EMBL" id="X76913">
    <property type="protein sequence ID" value="CAA54238.1"/>
    <property type="molecule type" value="Genomic_DNA"/>
</dbReference>
<dbReference type="EMBL" id="CP003504">
    <property type="protein sequence ID" value="AFM70576.1"/>
    <property type="molecule type" value="Genomic_DNA"/>
</dbReference>
<dbReference type="PIR" id="C53610">
    <property type="entry name" value="C53610"/>
</dbReference>
<dbReference type="RefSeq" id="WP_014834502.1">
    <property type="nucleotide sequence ID" value="NC_018081.1"/>
</dbReference>
<dbReference type="SMR" id="P43436"/>
<dbReference type="TCDB" id="3.A.2.2.2">
    <property type="family name" value="the h+- or na+-translocating f-type, v-type and a-type atpase (f-atpase) superfamily"/>
</dbReference>
<dbReference type="KEGG" id="ehr:EHR_08245"/>
<dbReference type="PATRIC" id="fig|768486.3.peg.1572"/>
<dbReference type="eggNOG" id="COG1390">
    <property type="taxonomic scope" value="Bacteria"/>
</dbReference>
<dbReference type="HOGENOM" id="CLU_105846_2_1_9"/>
<dbReference type="BioCyc" id="MetaCyc:MONOMER-14150"/>
<dbReference type="Proteomes" id="UP000002895">
    <property type="component" value="Chromosome"/>
</dbReference>
<dbReference type="GO" id="GO:0033178">
    <property type="term" value="C:proton-transporting two-sector ATPase complex, catalytic domain"/>
    <property type="evidence" value="ECO:0007669"/>
    <property type="project" value="InterPro"/>
</dbReference>
<dbReference type="GO" id="GO:0005524">
    <property type="term" value="F:ATP binding"/>
    <property type="evidence" value="ECO:0007669"/>
    <property type="project" value="UniProtKB-UniRule"/>
</dbReference>
<dbReference type="GO" id="GO:0046933">
    <property type="term" value="F:proton-transporting ATP synthase activity, rotational mechanism"/>
    <property type="evidence" value="ECO:0007669"/>
    <property type="project" value="UniProtKB-UniRule"/>
</dbReference>
<dbReference type="GO" id="GO:0046961">
    <property type="term" value="F:proton-transporting ATPase activity, rotational mechanism"/>
    <property type="evidence" value="ECO:0007669"/>
    <property type="project" value="InterPro"/>
</dbReference>
<dbReference type="GO" id="GO:0042777">
    <property type="term" value="P:proton motive force-driven plasma membrane ATP synthesis"/>
    <property type="evidence" value="ECO:0007669"/>
    <property type="project" value="UniProtKB-UniRule"/>
</dbReference>
<dbReference type="GO" id="GO:0006814">
    <property type="term" value="P:sodium ion transport"/>
    <property type="evidence" value="ECO:0007669"/>
    <property type="project" value="UniProtKB-KW"/>
</dbReference>
<dbReference type="HAMAP" id="MF_00311">
    <property type="entry name" value="ATP_synth_E_arch"/>
    <property type="match status" value="1"/>
</dbReference>
<dbReference type="InterPro" id="IPR002842">
    <property type="entry name" value="ATPase_V1_Esu"/>
</dbReference>
<dbReference type="SUPFAM" id="SSF160527">
    <property type="entry name" value="V-type ATPase subunit E-like"/>
    <property type="match status" value="1"/>
</dbReference>
<keyword id="KW-0406">Ion transport</keyword>
<keyword id="KW-0915">Sodium</keyword>
<keyword id="KW-0739">Sodium transport</keyword>
<keyword id="KW-0813">Transport</keyword>
<accession>P43436</accession>
<accession>I6T726</accession>
<organism>
    <name type="scientific">Enterococcus hirae (strain ATCC 9790 / DSM 20160 / JCM 8729 / LMG 6399 / NBRC 3181 / NCIMB 6459 / NCDO 1258 / NCTC 12367 / WDCM 00089 / R)</name>
    <dbReference type="NCBI Taxonomy" id="768486"/>
    <lineage>
        <taxon>Bacteria</taxon>
        <taxon>Bacillati</taxon>
        <taxon>Bacillota</taxon>
        <taxon>Bacilli</taxon>
        <taxon>Lactobacillales</taxon>
        <taxon>Enterococcaceae</taxon>
        <taxon>Enterococcus</taxon>
    </lineage>
</organism>
<proteinExistence type="inferred from homology"/>
<name>NTPE_ENTHA</name>
<protein>
    <recommendedName>
        <fullName>V-type sodium ATPase subunit E</fullName>
    </recommendedName>
    <alternativeName>
        <fullName>Na(+)-translocating ATPase subunit E</fullName>
    </alternativeName>
    <alternativeName>
        <fullName>V-type sodium pump subunit E</fullName>
    </alternativeName>
</protein>
<sequence length="193" mass="22611">MPIDKIITQINETAQLERASFEEMKRKEIDQKFEVKKWQIEADFQKEKASKLEEIERSYRQLRNKQKMQVKQEILNAKQEVLQRLFTEATLQLENEPKEEQLALMKQMIQTLPINGTARLIPGEKSADILTPAVIAEWNEELPFELIREDFTEKAQAGLIIDDAGIQYNFLFSHLIKEIQETMSAEIAKELFD</sequence>
<reference key="1">
    <citation type="journal article" date="1994" name="J. Biol. Chem.">
        <title>Sequencing and characterization of the ntp gene cluster for vacuolar-type Na(+)-translocating ATPase of Enterococcus hirae.</title>
        <authorList>
            <person name="Takase K."/>
            <person name="Kakinuma S."/>
            <person name="Yamato I."/>
            <person name="Konishi K."/>
            <person name="Igarashi K."/>
            <person name="Kakinuma Y."/>
        </authorList>
    </citation>
    <scope>NUCLEOTIDE SEQUENCE [GENOMIC DNA]</scope>
    <source>
        <strain>ATCC 9790 / DSM 20160 / JCM 8729 / LMG 6399 / NBRC 3181 / NCIMB 6459 / NCDO 1258 / NCTC 12367 / WDCM 00089 / R</strain>
    </source>
</reference>
<reference key="2">
    <citation type="journal article" date="1994" name="J. Biol. Chem.">
        <title>Operon of vacuolar-type Na(+)-ATPase of Enterococcus hirae.</title>
        <authorList>
            <person name="Solioz M."/>
            <person name="Davies K."/>
        </authorList>
    </citation>
    <scope>NUCLEOTIDE SEQUENCE [GENOMIC DNA]</scope>
    <source>
        <strain>ATCC 9790 / DSM 20160 / JCM 8729 / LMG 6399 / NBRC 3181 / NCIMB 6459 / NCDO 1258 / NCTC 12367 / WDCM 00089 / R</strain>
    </source>
</reference>
<reference key="3">
    <citation type="journal article" date="2012" name="J. Bacteriol.">
        <title>Genome sequence of Enterococcus hirae (Streptococcus faecalis) ATCC 9790, a model organism for the study of ion transport, bioenergetics, and copper homeostasis.</title>
        <authorList>
            <person name="Gaechter T."/>
            <person name="Wunderlin C."/>
            <person name="Schmidheini T."/>
            <person name="Solioz M."/>
        </authorList>
    </citation>
    <scope>NUCLEOTIDE SEQUENCE [LARGE SCALE GENOMIC DNA]</scope>
    <source>
        <strain>ATCC 9790 / DSM 20160 / JCM 8729 / LMG 6399 / NBRC 3181 / NCIMB 6459 / NCDO 1258 / NCTC 12367 / WDCM 00089 / R</strain>
    </source>
</reference>
<evidence type="ECO:0000305" key="1"/>